<dbReference type="EC" id="4.3.1.3" evidence="1"/>
<dbReference type="EMBL" id="CP001176">
    <property type="protein sequence ID" value="ACK62717.1"/>
    <property type="molecule type" value="Genomic_DNA"/>
</dbReference>
<dbReference type="SMR" id="B7HCD0"/>
<dbReference type="KEGG" id="bcb:BCB4264_A3760"/>
<dbReference type="HOGENOM" id="CLU_014801_4_0_9"/>
<dbReference type="UniPathway" id="UPA00379">
    <property type="reaction ID" value="UER00549"/>
</dbReference>
<dbReference type="Proteomes" id="UP000007096">
    <property type="component" value="Chromosome"/>
</dbReference>
<dbReference type="GO" id="GO:0005737">
    <property type="term" value="C:cytoplasm"/>
    <property type="evidence" value="ECO:0007669"/>
    <property type="project" value="UniProtKB-SubCell"/>
</dbReference>
<dbReference type="GO" id="GO:0004397">
    <property type="term" value="F:histidine ammonia-lyase activity"/>
    <property type="evidence" value="ECO:0007669"/>
    <property type="project" value="UniProtKB-UniRule"/>
</dbReference>
<dbReference type="GO" id="GO:0019556">
    <property type="term" value="P:L-histidine catabolic process to glutamate and formamide"/>
    <property type="evidence" value="ECO:0007669"/>
    <property type="project" value="UniProtKB-UniPathway"/>
</dbReference>
<dbReference type="GO" id="GO:0019557">
    <property type="term" value="P:L-histidine catabolic process to glutamate and formate"/>
    <property type="evidence" value="ECO:0007669"/>
    <property type="project" value="UniProtKB-UniPathway"/>
</dbReference>
<dbReference type="CDD" id="cd00332">
    <property type="entry name" value="PAL-HAL"/>
    <property type="match status" value="1"/>
</dbReference>
<dbReference type="FunFam" id="1.10.275.10:FF:000008">
    <property type="entry name" value="Histidine ammonia-lyase"/>
    <property type="match status" value="1"/>
</dbReference>
<dbReference type="FunFam" id="1.20.200.10:FF:000003">
    <property type="entry name" value="Histidine ammonia-lyase"/>
    <property type="match status" value="1"/>
</dbReference>
<dbReference type="Gene3D" id="1.20.200.10">
    <property type="entry name" value="Fumarase/aspartase (Central domain)"/>
    <property type="match status" value="1"/>
</dbReference>
<dbReference type="Gene3D" id="1.10.275.10">
    <property type="entry name" value="Fumarase/aspartase (N-terminal domain)"/>
    <property type="match status" value="1"/>
</dbReference>
<dbReference type="HAMAP" id="MF_00229">
    <property type="entry name" value="His_ammonia_lyase"/>
    <property type="match status" value="1"/>
</dbReference>
<dbReference type="InterPro" id="IPR001106">
    <property type="entry name" value="Aromatic_Lyase"/>
</dbReference>
<dbReference type="InterPro" id="IPR024083">
    <property type="entry name" value="Fumarase/histidase_N"/>
</dbReference>
<dbReference type="InterPro" id="IPR005921">
    <property type="entry name" value="HutH"/>
</dbReference>
<dbReference type="InterPro" id="IPR008948">
    <property type="entry name" value="L-Aspartase-like"/>
</dbReference>
<dbReference type="InterPro" id="IPR022313">
    <property type="entry name" value="Phe/His_NH3-lyase_AS"/>
</dbReference>
<dbReference type="NCBIfam" id="TIGR01225">
    <property type="entry name" value="hutH"/>
    <property type="match status" value="1"/>
</dbReference>
<dbReference type="NCBIfam" id="NF006871">
    <property type="entry name" value="PRK09367.1"/>
    <property type="match status" value="1"/>
</dbReference>
<dbReference type="PANTHER" id="PTHR10362">
    <property type="entry name" value="HISTIDINE AMMONIA-LYASE"/>
    <property type="match status" value="1"/>
</dbReference>
<dbReference type="Pfam" id="PF00221">
    <property type="entry name" value="Lyase_aromatic"/>
    <property type="match status" value="1"/>
</dbReference>
<dbReference type="SUPFAM" id="SSF48557">
    <property type="entry name" value="L-aspartase-like"/>
    <property type="match status" value="1"/>
</dbReference>
<dbReference type="PROSITE" id="PS00488">
    <property type="entry name" value="PAL_HISTIDASE"/>
    <property type="match status" value="1"/>
</dbReference>
<keyword id="KW-0963">Cytoplasm</keyword>
<keyword id="KW-0369">Histidine metabolism</keyword>
<keyword id="KW-0456">Lyase</keyword>
<proteinExistence type="inferred from homology"/>
<reference key="1">
    <citation type="submission" date="2008-10" db="EMBL/GenBank/DDBJ databases">
        <title>Genome sequence of Bacillus cereus B4264.</title>
        <authorList>
            <person name="Dodson R.J."/>
            <person name="Durkin A.S."/>
            <person name="Rosovitz M.J."/>
            <person name="Rasko D.A."/>
            <person name="Hoffmaster A."/>
            <person name="Ravel J."/>
            <person name="Sutton G."/>
        </authorList>
    </citation>
    <scope>NUCLEOTIDE SEQUENCE [LARGE SCALE GENOMIC DNA]</scope>
    <source>
        <strain>B4264</strain>
    </source>
</reference>
<gene>
    <name evidence="1" type="primary">hutH</name>
    <name type="ordered locus">BCB4264_A3760</name>
</gene>
<comment type="catalytic activity">
    <reaction evidence="1">
        <text>L-histidine = trans-urocanate + NH4(+)</text>
        <dbReference type="Rhea" id="RHEA:21232"/>
        <dbReference type="ChEBI" id="CHEBI:17771"/>
        <dbReference type="ChEBI" id="CHEBI:28938"/>
        <dbReference type="ChEBI" id="CHEBI:57595"/>
        <dbReference type="EC" id="4.3.1.3"/>
    </reaction>
</comment>
<comment type="pathway">
    <text evidence="1">Amino-acid degradation; L-histidine degradation into L-glutamate; N-formimidoyl-L-glutamate from L-histidine: step 1/3.</text>
</comment>
<comment type="subcellular location">
    <subcellularLocation>
        <location evidence="1">Cytoplasm</location>
    </subcellularLocation>
</comment>
<comment type="PTM">
    <text evidence="1">Contains an active site 4-methylidene-imidazol-5-one (MIO), which is formed autocatalytically by cyclization and dehydration of residues Ala-Ser-Gly.</text>
</comment>
<comment type="similarity">
    <text evidence="1">Belongs to the PAL/histidase family.</text>
</comment>
<name>HUTH_BACC4</name>
<feature type="chain" id="PRO_1000125090" description="Histidine ammonia-lyase">
    <location>
        <begin position="1"/>
        <end position="506"/>
    </location>
</feature>
<feature type="modified residue" description="2,3-didehydroalanine (Ser)" evidence="1">
    <location>
        <position position="143"/>
    </location>
</feature>
<feature type="cross-link" description="5-imidazolinone (Ala-Gly)" evidence="1">
    <location>
        <begin position="142"/>
        <end position="144"/>
    </location>
</feature>
<protein>
    <recommendedName>
        <fullName evidence="1">Histidine ammonia-lyase</fullName>
        <shortName evidence="1">Histidase</shortName>
        <ecNumber evidence="1">4.3.1.3</ecNumber>
    </recommendedName>
</protein>
<accession>B7HCD0</accession>
<organism>
    <name type="scientific">Bacillus cereus (strain B4264)</name>
    <dbReference type="NCBI Taxonomy" id="405532"/>
    <lineage>
        <taxon>Bacteria</taxon>
        <taxon>Bacillati</taxon>
        <taxon>Bacillota</taxon>
        <taxon>Bacilli</taxon>
        <taxon>Bacillales</taxon>
        <taxon>Bacillaceae</taxon>
        <taxon>Bacillus</taxon>
        <taxon>Bacillus cereus group</taxon>
    </lineage>
</organism>
<evidence type="ECO:0000255" key="1">
    <source>
        <dbReference type="HAMAP-Rule" id="MF_00229"/>
    </source>
</evidence>
<sequence>MMITLTGHTLTVEEMKRLLLEGEGVTACPTSMQKVAECREVVEKIVEDGKVVYGITTGFGKFSDVLIQKDDVKALQHNLIQSHACGIGDPFPEEVSRGMLILRANTMLKGVSGVRPLVVNMLLEFVNRKIHPVVPQQGSLGASGDLAPLSHLALVLLGEGEVFYKGKRVHAMVALTEEGLEPIELEAKEGLALINGTQAMTAQGVLSYIEAEATAYQAELIASMTIEGLQGIIDAFDENVHKARGYKEQVDVASRIRDILHDSKLTTKQGELRVQDAYSLRCIPQVHGASWQVLNYVKEKLEIEMNAATDNPLIFDGGEKVISGGNFHGQPIAFAMDFLKVGMAELANISERRIERLVNPQLNDLPPFLSPEPGLQSGAMIMQYAAASLVSENKTLAHPASVDSIPSSANQEDHVSMGTIASRHAHQIIQNVRRVLSIEMICAMQAAEYRGIENMSTVTKSFYHQGRQQVPSIKNDRIFSTDIENIAHWLKTNYSIKERLDVNAAL</sequence>